<gene>
    <name evidence="1" type="primary">ahcY</name>
    <name type="ordered locus">RPA4015</name>
</gene>
<comment type="function">
    <text evidence="1">May play a key role in the regulation of the intracellular concentration of adenosylhomocysteine.</text>
</comment>
<comment type="catalytic activity">
    <reaction evidence="1">
        <text>S-adenosyl-L-homocysteine + H2O = L-homocysteine + adenosine</text>
        <dbReference type="Rhea" id="RHEA:21708"/>
        <dbReference type="ChEBI" id="CHEBI:15377"/>
        <dbReference type="ChEBI" id="CHEBI:16335"/>
        <dbReference type="ChEBI" id="CHEBI:57856"/>
        <dbReference type="ChEBI" id="CHEBI:58199"/>
        <dbReference type="EC" id="3.13.2.1"/>
    </reaction>
</comment>
<comment type="cofactor">
    <cofactor evidence="1">
        <name>NAD(+)</name>
        <dbReference type="ChEBI" id="CHEBI:57540"/>
    </cofactor>
    <text evidence="1">Binds 1 NAD(+) per subunit.</text>
</comment>
<comment type="pathway">
    <text evidence="1">Amino-acid biosynthesis; L-homocysteine biosynthesis; L-homocysteine from S-adenosyl-L-homocysteine: step 1/1.</text>
</comment>
<comment type="subcellular location">
    <subcellularLocation>
        <location evidence="1">Cytoplasm</location>
    </subcellularLocation>
</comment>
<comment type="similarity">
    <text evidence="1">Belongs to the adenosylhomocysteinase family.</text>
</comment>
<accession>Q6N2N5</accession>
<protein>
    <recommendedName>
        <fullName evidence="1">Adenosylhomocysteinase</fullName>
        <ecNumber evidence="1">3.13.2.1</ecNumber>
    </recommendedName>
    <alternativeName>
        <fullName evidence="1">S-adenosyl-L-homocysteine hydrolase</fullName>
        <shortName evidence="1">AdoHcyase</shortName>
    </alternativeName>
</protein>
<feature type="chain" id="PRO_0000116984" description="Adenosylhomocysteinase">
    <location>
        <begin position="1"/>
        <end position="469"/>
    </location>
</feature>
<feature type="binding site" evidence="1">
    <location>
        <position position="58"/>
    </location>
    <ligand>
        <name>substrate</name>
    </ligand>
</feature>
<feature type="binding site" evidence="1">
    <location>
        <position position="133"/>
    </location>
    <ligand>
        <name>substrate</name>
    </ligand>
</feature>
<feature type="binding site" evidence="1">
    <location>
        <position position="195"/>
    </location>
    <ligand>
        <name>substrate</name>
    </ligand>
</feature>
<feature type="binding site" evidence="1">
    <location>
        <begin position="196"/>
        <end position="198"/>
    </location>
    <ligand>
        <name>NAD(+)</name>
        <dbReference type="ChEBI" id="CHEBI:57540"/>
    </ligand>
</feature>
<feature type="binding site" evidence="1">
    <location>
        <position position="225"/>
    </location>
    <ligand>
        <name>substrate</name>
    </ligand>
</feature>
<feature type="binding site" evidence="1">
    <location>
        <position position="229"/>
    </location>
    <ligand>
        <name>substrate</name>
    </ligand>
</feature>
<feature type="binding site" evidence="1">
    <location>
        <position position="230"/>
    </location>
    <ligand>
        <name>NAD(+)</name>
        <dbReference type="ChEBI" id="CHEBI:57540"/>
    </ligand>
</feature>
<feature type="binding site" evidence="1">
    <location>
        <begin position="259"/>
        <end position="264"/>
    </location>
    <ligand>
        <name>NAD(+)</name>
        <dbReference type="ChEBI" id="CHEBI:57540"/>
    </ligand>
</feature>
<feature type="binding site" evidence="1">
    <location>
        <position position="282"/>
    </location>
    <ligand>
        <name>NAD(+)</name>
        <dbReference type="ChEBI" id="CHEBI:57540"/>
    </ligand>
</feature>
<feature type="binding site" evidence="1">
    <location>
        <position position="317"/>
    </location>
    <ligand>
        <name>NAD(+)</name>
        <dbReference type="ChEBI" id="CHEBI:57540"/>
    </ligand>
</feature>
<feature type="binding site" evidence="1">
    <location>
        <begin position="338"/>
        <end position="340"/>
    </location>
    <ligand>
        <name>NAD(+)</name>
        <dbReference type="ChEBI" id="CHEBI:57540"/>
    </ligand>
</feature>
<feature type="binding site" evidence="1">
    <location>
        <position position="383"/>
    </location>
    <ligand>
        <name>NAD(+)</name>
        <dbReference type="ChEBI" id="CHEBI:57540"/>
    </ligand>
</feature>
<keyword id="KW-0963">Cytoplasm</keyword>
<keyword id="KW-0378">Hydrolase</keyword>
<keyword id="KW-0520">NAD</keyword>
<keyword id="KW-0554">One-carbon metabolism</keyword>
<dbReference type="EC" id="3.13.2.1" evidence="1"/>
<dbReference type="EMBL" id="BX572606">
    <property type="protein sequence ID" value="CAE29456.1"/>
    <property type="molecule type" value="Genomic_DNA"/>
</dbReference>
<dbReference type="RefSeq" id="WP_011159550.1">
    <property type="nucleotide sequence ID" value="NZ_CP116810.1"/>
</dbReference>
<dbReference type="SMR" id="Q6N2N5"/>
<dbReference type="STRING" id="258594.RPA4015"/>
<dbReference type="GeneID" id="66895133"/>
<dbReference type="eggNOG" id="COG0499">
    <property type="taxonomic scope" value="Bacteria"/>
</dbReference>
<dbReference type="HOGENOM" id="CLU_025194_2_1_5"/>
<dbReference type="PhylomeDB" id="Q6N2N5"/>
<dbReference type="UniPathway" id="UPA00314">
    <property type="reaction ID" value="UER00076"/>
</dbReference>
<dbReference type="GO" id="GO:0005829">
    <property type="term" value="C:cytosol"/>
    <property type="evidence" value="ECO:0007669"/>
    <property type="project" value="TreeGrafter"/>
</dbReference>
<dbReference type="GO" id="GO:0004013">
    <property type="term" value="F:adenosylhomocysteinase activity"/>
    <property type="evidence" value="ECO:0007669"/>
    <property type="project" value="UniProtKB-UniRule"/>
</dbReference>
<dbReference type="GO" id="GO:0071269">
    <property type="term" value="P:L-homocysteine biosynthetic process"/>
    <property type="evidence" value="ECO:0007669"/>
    <property type="project" value="UniProtKB-UniRule"/>
</dbReference>
<dbReference type="GO" id="GO:0006730">
    <property type="term" value="P:one-carbon metabolic process"/>
    <property type="evidence" value="ECO:0007669"/>
    <property type="project" value="UniProtKB-KW"/>
</dbReference>
<dbReference type="GO" id="GO:0033353">
    <property type="term" value="P:S-adenosylmethionine cycle"/>
    <property type="evidence" value="ECO:0007669"/>
    <property type="project" value="TreeGrafter"/>
</dbReference>
<dbReference type="CDD" id="cd00401">
    <property type="entry name" value="SAHH"/>
    <property type="match status" value="1"/>
</dbReference>
<dbReference type="FunFam" id="3.40.50.720:FF:000004">
    <property type="entry name" value="Adenosylhomocysteinase"/>
    <property type="match status" value="1"/>
</dbReference>
<dbReference type="Gene3D" id="3.40.50.1480">
    <property type="entry name" value="Adenosylhomocysteinase-like"/>
    <property type="match status" value="1"/>
</dbReference>
<dbReference type="Gene3D" id="3.40.50.720">
    <property type="entry name" value="NAD(P)-binding Rossmann-like Domain"/>
    <property type="match status" value="1"/>
</dbReference>
<dbReference type="HAMAP" id="MF_00563">
    <property type="entry name" value="AdoHcyase"/>
    <property type="match status" value="1"/>
</dbReference>
<dbReference type="InterPro" id="IPR042172">
    <property type="entry name" value="Adenosylhomocyst_ase-like_sf"/>
</dbReference>
<dbReference type="InterPro" id="IPR000043">
    <property type="entry name" value="Adenosylhomocysteinase-like"/>
</dbReference>
<dbReference type="InterPro" id="IPR015878">
    <property type="entry name" value="Ado_hCys_hydrolase_NAD-bd"/>
</dbReference>
<dbReference type="InterPro" id="IPR036291">
    <property type="entry name" value="NAD(P)-bd_dom_sf"/>
</dbReference>
<dbReference type="InterPro" id="IPR020082">
    <property type="entry name" value="S-Ado-L-homoCys_hydrolase_CS"/>
</dbReference>
<dbReference type="NCBIfam" id="TIGR00936">
    <property type="entry name" value="ahcY"/>
    <property type="match status" value="1"/>
</dbReference>
<dbReference type="NCBIfam" id="NF004005">
    <property type="entry name" value="PRK05476.2-3"/>
    <property type="match status" value="1"/>
</dbReference>
<dbReference type="PANTHER" id="PTHR23420">
    <property type="entry name" value="ADENOSYLHOMOCYSTEINASE"/>
    <property type="match status" value="1"/>
</dbReference>
<dbReference type="PANTHER" id="PTHR23420:SF0">
    <property type="entry name" value="ADENOSYLHOMOCYSTEINASE"/>
    <property type="match status" value="1"/>
</dbReference>
<dbReference type="Pfam" id="PF05221">
    <property type="entry name" value="AdoHcyase"/>
    <property type="match status" value="1"/>
</dbReference>
<dbReference type="Pfam" id="PF00670">
    <property type="entry name" value="AdoHcyase_NAD"/>
    <property type="match status" value="1"/>
</dbReference>
<dbReference type="PIRSF" id="PIRSF001109">
    <property type="entry name" value="Ad_hcy_hydrolase"/>
    <property type="match status" value="1"/>
</dbReference>
<dbReference type="SMART" id="SM00996">
    <property type="entry name" value="AdoHcyase"/>
    <property type="match status" value="1"/>
</dbReference>
<dbReference type="SMART" id="SM00997">
    <property type="entry name" value="AdoHcyase_NAD"/>
    <property type="match status" value="1"/>
</dbReference>
<dbReference type="SUPFAM" id="SSF52283">
    <property type="entry name" value="Formate/glycerate dehydrogenase catalytic domain-like"/>
    <property type="match status" value="1"/>
</dbReference>
<dbReference type="SUPFAM" id="SSF51735">
    <property type="entry name" value="NAD(P)-binding Rossmann-fold domains"/>
    <property type="match status" value="1"/>
</dbReference>
<dbReference type="PROSITE" id="PS00738">
    <property type="entry name" value="ADOHCYASE_1"/>
    <property type="match status" value="1"/>
</dbReference>
<dbReference type="PROSITE" id="PS00739">
    <property type="entry name" value="ADOHCYASE_2"/>
    <property type="match status" value="1"/>
</dbReference>
<proteinExistence type="inferred from homology"/>
<name>SAHH_RHOPA</name>
<reference key="1">
    <citation type="journal article" date="2004" name="Nat. Biotechnol.">
        <title>Complete genome sequence of the metabolically versatile photosynthetic bacterium Rhodopseudomonas palustris.</title>
        <authorList>
            <person name="Larimer F.W."/>
            <person name="Chain P."/>
            <person name="Hauser L."/>
            <person name="Lamerdin J.E."/>
            <person name="Malfatti S."/>
            <person name="Do L."/>
            <person name="Land M.L."/>
            <person name="Pelletier D.A."/>
            <person name="Beatty J.T."/>
            <person name="Lang A.S."/>
            <person name="Tabita F.R."/>
            <person name="Gibson J.L."/>
            <person name="Hanson T.E."/>
            <person name="Bobst C."/>
            <person name="Torres y Torres J.L."/>
            <person name="Peres C."/>
            <person name="Harrison F.H."/>
            <person name="Gibson J."/>
            <person name="Harwood C.S."/>
        </authorList>
    </citation>
    <scope>NUCLEOTIDE SEQUENCE [LARGE SCALE GENOMIC DNA]</scope>
    <source>
        <strain>ATCC BAA-98 / CGA009</strain>
    </source>
</reference>
<organism>
    <name type="scientific">Rhodopseudomonas palustris (strain ATCC BAA-98 / CGA009)</name>
    <dbReference type="NCBI Taxonomy" id="258594"/>
    <lineage>
        <taxon>Bacteria</taxon>
        <taxon>Pseudomonadati</taxon>
        <taxon>Pseudomonadota</taxon>
        <taxon>Alphaproteobacteria</taxon>
        <taxon>Hyphomicrobiales</taxon>
        <taxon>Nitrobacteraceae</taxon>
        <taxon>Rhodopseudomonas</taxon>
    </lineage>
</organism>
<sequence>MTAKFTDYIVKDIGLAEFGRKEISLAETEMPGLMATREEYGPKQPLKGAKIAGSLHMTIQTAVLIETLVALGAEVRWVSCNIYSTQDHAAAAIAAAGIPVFAVKGETLKDYWDYTAKLFDWSDGGTPNMILDDGGDATMFVHQGLRAENGDTMFLDQHNSEEEEIFFALIKRILKEKPKGYFATLAKNIKGVSEETTTGVHRLYDMEKAGKLLFPAINVNDSVTKSKFDNLYGCRESLVDGIRRGTDVMLSGKVAMVAGFGDVGKGSAASLRQAGCRVMVSEVDPICALQAAMEGYQVVTMEDAAPIADIFVTATGNKDIITIEHMRAMKDRAIVCNIGHFDNEIQVATLKNMKWDNIKPQVDEITFPDGKRMILLSEGRLVNLGNAMGHPSFVMSASFTNQTLAQIELFQNQGKYEKKVYVLPKTLDEKVARLHLAKIGVKLTELRKDQADYIGVKVEGPFKADHYRY</sequence>
<evidence type="ECO:0000255" key="1">
    <source>
        <dbReference type="HAMAP-Rule" id="MF_00563"/>
    </source>
</evidence>